<comment type="function">
    <text evidence="1">Binds the lower part of the 30S subunit head. Binds mRNA in the 70S ribosome, positioning it for translation.</text>
</comment>
<comment type="subunit">
    <text evidence="1">Part of the 30S ribosomal subunit. Forms a tight complex with proteins S10 and S14.</text>
</comment>
<comment type="similarity">
    <text evidence="1">Belongs to the universal ribosomal protein uS3 family.</text>
</comment>
<protein>
    <recommendedName>
        <fullName evidence="1">Small ribosomal subunit protein uS3</fullName>
    </recommendedName>
    <alternativeName>
        <fullName evidence="3">30S ribosomal protein S3</fullName>
    </alternativeName>
</protein>
<feature type="chain" id="PRO_1000086092" description="Small ribosomal subunit protein uS3">
    <location>
        <begin position="1"/>
        <end position="236"/>
    </location>
</feature>
<feature type="domain" description="KH type-2" evidence="1">
    <location>
        <begin position="39"/>
        <end position="107"/>
    </location>
</feature>
<feature type="region of interest" description="Disordered" evidence="2">
    <location>
        <begin position="213"/>
        <end position="236"/>
    </location>
</feature>
<name>RS3_BRASB</name>
<accession>A5ELM1</accession>
<sequence length="236" mass="26471">MGQKINPIGLRLGINRTWDSRWFAGKAEYGKLLHEDVKIREILHKELKQAAVARIVIERPHKKCRVTIHSARPGVVIGKKGADIDKLRKRVADITSSDVVINIVEIRKPELDATLVAESIAQQLERRVAFRRAMKRAVQSAMRLGAEGIRINCSGRLGGAEIARMEWYREGRVPLHTLRADIDYGVATAFTTFGTCGVKVWIFKGEILEHDPMAQDKRMNEGGGESSQPRSRRDAA</sequence>
<proteinExistence type="inferred from homology"/>
<organism>
    <name type="scientific">Bradyrhizobium sp. (strain BTAi1 / ATCC BAA-1182)</name>
    <dbReference type="NCBI Taxonomy" id="288000"/>
    <lineage>
        <taxon>Bacteria</taxon>
        <taxon>Pseudomonadati</taxon>
        <taxon>Pseudomonadota</taxon>
        <taxon>Alphaproteobacteria</taxon>
        <taxon>Hyphomicrobiales</taxon>
        <taxon>Nitrobacteraceae</taxon>
        <taxon>Bradyrhizobium</taxon>
    </lineage>
</organism>
<reference key="1">
    <citation type="journal article" date="2007" name="Science">
        <title>Legumes symbioses: absence of nod genes in photosynthetic bradyrhizobia.</title>
        <authorList>
            <person name="Giraud E."/>
            <person name="Moulin L."/>
            <person name="Vallenet D."/>
            <person name="Barbe V."/>
            <person name="Cytryn E."/>
            <person name="Avarre J.-C."/>
            <person name="Jaubert M."/>
            <person name="Simon D."/>
            <person name="Cartieaux F."/>
            <person name="Prin Y."/>
            <person name="Bena G."/>
            <person name="Hannibal L."/>
            <person name="Fardoux J."/>
            <person name="Kojadinovic M."/>
            <person name="Vuillet L."/>
            <person name="Lajus A."/>
            <person name="Cruveiller S."/>
            <person name="Rouy Z."/>
            <person name="Mangenot S."/>
            <person name="Segurens B."/>
            <person name="Dossat C."/>
            <person name="Franck W.L."/>
            <person name="Chang W.-S."/>
            <person name="Saunders E."/>
            <person name="Bruce D."/>
            <person name="Richardson P."/>
            <person name="Normand P."/>
            <person name="Dreyfus B."/>
            <person name="Pignol D."/>
            <person name="Stacey G."/>
            <person name="Emerich D."/>
            <person name="Vermeglio A."/>
            <person name="Medigue C."/>
            <person name="Sadowsky M."/>
        </authorList>
    </citation>
    <scope>NUCLEOTIDE SEQUENCE [LARGE SCALE GENOMIC DNA]</scope>
    <source>
        <strain>BTAi1 / ATCC BAA-1182</strain>
    </source>
</reference>
<gene>
    <name evidence="1" type="primary">rpsC</name>
    <name type="ordered locus">BBta_5064</name>
</gene>
<keyword id="KW-1185">Reference proteome</keyword>
<keyword id="KW-0687">Ribonucleoprotein</keyword>
<keyword id="KW-0689">Ribosomal protein</keyword>
<keyword id="KW-0694">RNA-binding</keyword>
<keyword id="KW-0699">rRNA-binding</keyword>
<dbReference type="EMBL" id="CP000494">
    <property type="protein sequence ID" value="ABQ37065.1"/>
    <property type="molecule type" value="Genomic_DNA"/>
</dbReference>
<dbReference type="RefSeq" id="WP_012045041.1">
    <property type="nucleotide sequence ID" value="NC_009485.1"/>
</dbReference>
<dbReference type="SMR" id="A5ELM1"/>
<dbReference type="STRING" id="288000.BBta_5064"/>
<dbReference type="KEGG" id="bbt:BBta_5064"/>
<dbReference type="eggNOG" id="COG0092">
    <property type="taxonomic scope" value="Bacteria"/>
</dbReference>
<dbReference type="HOGENOM" id="CLU_058591_0_2_5"/>
<dbReference type="OrthoDB" id="9806396at2"/>
<dbReference type="Proteomes" id="UP000000246">
    <property type="component" value="Chromosome"/>
</dbReference>
<dbReference type="GO" id="GO:0022627">
    <property type="term" value="C:cytosolic small ribosomal subunit"/>
    <property type="evidence" value="ECO:0007669"/>
    <property type="project" value="TreeGrafter"/>
</dbReference>
<dbReference type="GO" id="GO:0003729">
    <property type="term" value="F:mRNA binding"/>
    <property type="evidence" value="ECO:0007669"/>
    <property type="project" value="UniProtKB-UniRule"/>
</dbReference>
<dbReference type="GO" id="GO:0019843">
    <property type="term" value="F:rRNA binding"/>
    <property type="evidence" value="ECO:0007669"/>
    <property type="project" value="UniProtKB-UniRule"/>
</dbReference>
<dbReference type="GO" id="GO:0003735">
    <property type="term" value="F:structural constituent of ribosome"/>
    <property type="evidence" value="ECO:0007669"/>
    <property type="project" value="InterPro"/>
</dbReference>
<dbReference type="GO" id="GO:0006412">
    <property type="term" value="P:translation"/>
    <property type="evidence" value="ECO:0007669"/>
    <property type="project" value="UniProtKB-UniRule"/>
</dbReference>
<dbReference type="CDD" id="cd02412">
    <property type="entry name" value="KH-II_30S_S3"/>
    <property type="match status" value="1"/>
</dbReference>
<dbReference type="FunFam" id="3.30.1140.32:FF:000009">
    <property type="entry name" value="30S ribosomal protein S3"/>
    <property type="match status" value="1"/>
</dbReference>
<dbReference type="FunFam" id="3.30.300.20:FF:000001">
    <property type="entry name" value="30S ribosomal protein S3"/>
    <property type="match status" value="1"/>
</dbReference>
<dbReference type="Gene3D" id="3.30.300.20">
    <property type="match status" value="1"/>
</dbReference>
<dbReference type="Gene3D" id="3.30.1140.32">
    <property type="entry name" value="Ribosomal protein S3, C-terminal domain"/>
    <property type="match status" value="1"/>
</dbReference>
<dbReference type="HAMAP" id="MF_01309_B">
    <property type="entry name" value="Ribosomal_uS3_B"/>
    <property type="match status" value="1"/>
</dbReference>
<dbReference type="InterPro" id="IPR004087">
    <property type="entry name" value="KH_dom"/>
</dbReference>
<dbReference type="InterPro" id="IPR015946">
    <property type="entry name" value="KH_dom-like_a/b"/>
</dbReference>
<dbReference type="InterPro" id="IPR004044">
    <property type="entry name" value="KH_dom_type_2"/>
</dbReference>
<dbReference type="InterPro" id="IPR009019">
    <property type="entry name" value="KH_sf_prok-type"/>
</dbReference>
<dbReference type="InterPro" id="IPR036419">
    <property type="entry name" value="Ribosomal_S3_C_sf"/>
</dbReference>
<dbReference type="InterPro" id="IPR005704">
    <property type="entry name" value="Ribosomal_uS3_bac-typ"/>
</dbReference>
<dbReference type="InterPro" id="IPR001351">
    <property type="entry name" value="Ribosomal_uS3_C"/>
</dbReference>
<dbReference type="InterPro" id="IPR018280">
    <property type="entry name" value="Ribosomal_uS3_CS"/>
</dbReference>
<dbReference type="NCBIfam" id="TIGR01009">
    <property type="entry name" value="rpsC_bact"/>
    <property type="match status" value="1"/>
</dbReference>
<dbReference type="PANTHER" id="PTHR11760">
    <property type="entry name" value="30S/40S RIBOSOMAL PROTEIN S3"/>
    <property type="match status" value="1"/>
</dbReference>
<dbReference type="PANTHER" id="PTHR11760:SF19">
    <property type="entry name" value="SMALL RIBOSOMAL SUBUNIT PROTEIN US3C"/>
    <property type="match status" value="1"/>
</dbReference>
<dbReference type="Pfam" id="PF07650">
    <property type="entry name" value="KH_2"/>
    <property type="match status" value="1"/>
</dbReference>
<dbReference type="Pfam" id="PF00189">
    <property type="entry name" value="Ribosomal_S3_C"/>
    <property type="match status" value="1"/>
</dbReference>
<dbReference type="SMART" id="SM00322">
    <property type="entry name" value="KH"/>
    <property type="match status" value="1"/>
</dbReference>
<dbReference type="SUPFAM" id="SSF54814">
    <property type="entry name" value="Prokaryotic type KH domain (KH-domain type II)"/>
    <property type="match status" value="1"/>
</dbReference>
<dbReference type="SUPFAM" id="SSF54821">
    <property type="entry name" value="Ribosomal protein S3 C-terminal domain"/>
    <property type="match status" value="1"/>
</dbReference>
<dbReference type="PROSITE" id="PS50823">
    <property type="entry name" value="KH_TYPE_2"/>
    <property type="match status" value="1"/>
</dbReference>
<dbReference type="PROSITE" id="PS00548">
    <property type="entry name" value="RIBOSOMAL_S3"/>
    <property type="match status" value="1"/>
</dbReference>
<evidence type="ECO:0000255" key="1">
    <source>
        <dbReference type="HAMAP-Rule" id="MF_01309"/>
    </source>
</evidence>
<evidence type="ECO:0000256" key="2">
    <source>
        <dbReference type="SAM" id="MobiDB-lite"/>
    </source>
</evidence>
<evidence type="ECO:0000305" key="3"/>